<proteinExistence type="inferred from homology"/>
<name>MDTH_EDWI9</name>
<feature type="chain" id="PRO_1000215397" description="Multidrug resistance protein MdtH">
    <location>
        <begin position="1"/>
        <end position="402"/>
    </location>
</feature>
<feature type="transmembrane region" description="Helical" evidence="1">
    <location>
        <begin position="13"/>
        <end position="33"/>
    </location>
</feature>
<feature type="transmembrane region" description="Helical" evidence="1">
    <location>
        <begin position="34"/>
        <end position="54"/>
    </location>
</feature>
<feature type="transmembrane region" description="Helical" evidence="1">
    <location>
        <begin position="99"/>
        <end position="116"/>
    </location>
</feature>
<feature type="transmembrane region" description="Helical" evidence="1">
    <location>
        <begin position="139"/>
        <end position="159"/>
    </location>
</feature>
<feature type="transmembrane region" description="Helical" evidence="1">
    <location>
        <begin position="165"/>
        <end position="185"/>
    </location>
</feature>
<feature type="transmembrane region" description="Helical" evidence="1">
    <location>
        <begin position="214"/>
        <end position="234"/>
    </location>
</feature>
<feature type="transmembrane region" description="Helical" evidence="1">
    <location>
        <begin position="244"/>
        <end position="264"/>
    </location>
</feature>
<feature type="transmembrane region" description="Helical" evidence="1">
    <location>
        <begin position="277"/>
        <end position="297"/>
    </location>
</feature>
<feature type="transmembrane region" description="Helical" evidence="1">
    <location>
        <begin position="340"/>
        <end position="360"/>
    </location>
</feature>
<feature type="transmembrane region" description="Helical" evidence="1">
    <location>
        <begin position="368"/>
        <end position="388"/>
    </location>
</feature>
<dbReference type="EMBL" id="CP001600">
    <property type="protein sequence ID" value="ACR68764.1"/>
    <property type="molecule type" value="Genomic_DNA"/>
</dbReference>
<dbReference type="RefSeq" id="WP_015870922.1">
    <property type="nucleotide sequence ID" value="NZ_CP169062.1"/>
</dbReference>
<dbReference type="SMR" id="C5B828"/>
<dbReference type="STRING" id="67780.B6E78_01090"/>
<dbReference type="GeneID" id="69538557"/>
<dbReference type="KEGG" id="eic:NT01EI_1580"/>
<dbReference type="PATRIC" id="fig|634503.3.peg.1412"/>
<dbReference type="HOGENOM" id="CLU_001265_60_2_6"/>
<dbReference type="OrthoDB" id="56516at2"/>
<dbReference type="Proteomes" id="UP000001485">
    <property type="component" value="Chromosome"/>
</dbReference>
<dbReference type="GO" id="GO:0005886">
    <property type="term" value="C:plasma membrane"/>
    <property type="evidence" value="ECO:0007669"/>
    <property type="project" value="UniProtKB-SubCell"/>
</dbReference>
<dbReference type="GO" id="GO:0022857">
    <property type="term" value="F:transmembrane transporter activity"/>
    <property type="evidence" value="ECO:0007669"/>
    <property type="project" value="UniProtKB-UniRule"/>
</dbReference>
<dbReference type="CDD" id="cd17329">
    <property type="entry name" value="MFS_MdtH_MDR_like"/>
    <property type="match status" value="1"/>
</dbReference>
<dbReference type="Gene3D" id="1.20.1250.20">
    <property type="entry name" value="MFS general substrate transporter like domains"/>
    <property type="match status" value="1"/>
</dbReference>
<dbReference type="HAMAP" id="MF_01529">
    <property type="entry name" value="MFS_MdtH"/>
    <property type="match status" value="1"/>
</dbReference>
<dbReference type="InterPro" id="IPR011701">
    <property type="entry name" value="MFS"/>
</dbReference>
<dbReference type="InterPro" id="IPR020846">
    <property type="entry name" value="MFS_dom"/>
</dbReference>
<dbReference type="InterPro" id="IPR036259">
    <property type="entry name" value="MFS_trans_sf"/>
</dbReference>
<dbReference type="InterPro" id="IPR050171">
    <property type="entry name" value="MFS_Transporters"/>
</dbReference>
<dbReference type="InterPro" id="IPR022855">
    <property type="entry name" value="Multidrug-R_MdtH"/>
</dbReference>
<dbReference type="NCBIfam" id="NF008650">
    <property type="entry name" value="PRK11646.1"/>
    <property type="match status" value="1"/>
</dbReference>
<dbReference type="PANTHER" id="PTHR23517:SF2">
    <property type="entry name" value="MULTIDRUG RESISTANCE PROTEIN MDTH"/>
    <property type="match status" value="1"/>
</dbReference>
<dbReference type="PANTHER" id="PTHR23517">
    <property type="entry name" value="RESISTANCE PROTEIN MDTM, PUTATIVE-RELATED-RELATED"/>
    <property type="match status" value="1"/>
</dbReference>
<dbReference type="Pfam" id="PF07690">
    <property type="entry name" value="MFS_1"/>
    <property type="match status" value="1"/>
</dbReference>
<dbReference type="SUPFAM" id="SSF103473">
    <property type="entry name" value="MFS general substrate transporter"/>
    <property type="match status" value="1"/>
</dbReference>
<dbReference type="PROSITE" id="PS50850">
    <property type="entry name" value="MFS"/>
    <property type="match status" value="1"/>
</dbReference>
<gene>
    <name evidence="1" type="primary">mdtH</name>
    <name type="ordered locus">NT01EI_1580</name>
</gene>
<reference key="1">
    <citation type="submission" date="2009-03" db="EMBL/GenBank/DDBJ databases">
        <title>Complete genome sequence of Edwardsiella ictaluri 93-146.</title>
        <authorList>
            <person name="Williams M.L."/>
            <person name="Gillaspy A.F."/>
            <person name="Dyer D.W."/>
            <person name="Thune R.L."/>
            <person name="Waldbieser G.C."/>
            <person name="Schuster S.C."/>
            <person name="Gipson J."/>
            <person name="Zaitshik J."/>
            <person name="Landry C."/>
            <person name="Lawrence M.L."/>
        </authorList>
    </citation>
    <scope>NUCLEOTIDE SEQUENCE [LARGE SCALE GENOMIC DNA]</scope>
    <source>
        <strain>93-146</strain>
    </source>
</reference>
<protein>
    <recommendedName>
        <fullName evidence="1">Multidrug resistance protein MdtH</fullName>
    </recommendedName>
</protein>
<evidence type="ECO:0000255" key="1">
    <source>
        <dbReference type="HAMAP-Rule" id="MF_01529"/>
    </source>
</evidence>
<sequence length="402" mass="44143">MSLVLQARRSGKYFLLIDNLLVVLGFFVVFPLISIRFVDQLGWAALIVGIALGLRQLLQQGLGIFGGAIADRVGAKPMIISGMLLRAAGFATMAVASEPWILWASCTLSALGGTLFDPPRTALVIKLTRPHERGRFYSLLMMQDSAGAVIGALIGSWLLAYDFHYVCWAGAALFVLAAAWNAWLLPAYRISTIRAPVREGMLRVVRDRRFLTYVLTLTGYYMLAVQVMLMLPIMVNDIAGGPGAVKWMYAIEAALSLTLLYPIARWSEKRFRLEQRLMFGLLLMTLSLFPLGLSTTLQSLFALICCFYLGSIIAEPARETLSASLADARARGSYMGFSRLGLALGGALGYTGGGWMYDMGRSMNMPELPWALLGIIGMLTLALLYWQFSLQVPCATHQPRSS</sequence>
<keyword id="KW-0997">Cell inner membrane</keyword>
<keyword id="KW-1003">Cell membrane</keyword>
<keyword id="KW-0472">Membrane</keyword>
<keyword id="KW-0812">Transmembrane</keyword>
<keyword id="KW-1133">Transmembrane helix</keyword>
<keyword id="KW-0813">Transport</keyword>
<comment type="subcellular location">
    <subcellularLocation>
        <location evidence="1">Cell inner membrane</location>
        <topology evidence="1">Multi-pass membrane protein</topology>
    </subcellularLocation>
</comment>
<comment type="similarity">
    <text evidence="1">Belongs to the major facilitator superfamily. DHA1 family. MdtH (TC 2.A.1.2.21) subfamily.</text>
</comment>
<accession>C5B828</accession>
<organism>
    <name type="scientific">Edwardsiella ictaluri (strain 93-146)</name>
    <dbReference type="NCBI Taxonomy" id="634503"/>
    <lineage>
        <taxon>Bacteria</taxon>
        <taxon>Pseudomonadati</taxon>
        <taxon>Pseudomonadota</taxon>
        <taxon>Gammaproteobacteria</taxon>
        <taxon>Enterobacterales</taxon>
        <taxon>Hafniaceae</taxon>
        <taxon>Edwardsiella</taxon>
    </lineage>
</organism>